<comment type="function">
    <text evidence="1">Heme chaperone required for the biogenesis of c-type cytochromes. Transiently binds heme delivered by CcmC and transfers the heme to apo-cytochromes in a process facilitated by CcmF and CcmH.</text>
</comment>
<comment type="subcellular location">
    <subcellularLocation>
        <location evidence="1">Cell inner membrane</location>
        <topology evidence="1">Single-pass type II membrane protein</topology>
        <orientation evidence="1">Periplasmic side</orientation>
    </subcellularLocation>
</comment>
<comment type="similarity">
    <text evidence="1">Belongs to the CcmE/CycJ family.</text>
</comment>
<proteinExistence type="inferred from homology"/>
<gene>
    <name evidence="1" type="primary">ccmE</name>
    <name evidence="1" type="synonym">cycJ</name>
    <name type="ordered locus">Reut_B4769</name>
</gene>
<sequence length="159" mass="17339">MTPRQRRLGMLLAALACAGIALALVLNAFRSNLVFFFSPSQVAAHEAPASRSFRLGGLVAPGSIRREGDGMTVRFIVTDKAREVPVVYRGLLPDLFREGKGVVARGTLDRSGTFVASEVLAKHDENYMPPEAADALKQAEQVNRRMASQLAEGERETQR</sequence>
<accession>Q46RW7</accession>
<organism>
    <name type="scientific">Cupriavidus pinatubonensis (strain JMP 134 / LMG 1197)</name>
    <name type="common">Cupriavidus necator (strain JMP 134)</name>
    <dbReference type="NCBI Taxonomy" id="264198"/>
    <lineage>
        <taxon>Bacteria</taxon>
        <taxon>Pseudomonadati</taxon>
        <taxon>Pseudomonadota</taxon>
        <taxon>Betaproteobacteria</taxon>
        <taxon>Burkholderiales</taxon>
        <taxon>Burkholderiaceae</taxon>
        <taxon>Cupriavidus</taxon>
    </lineage>
</organism>
<keyword id="KW-0997">Cell inner membrane</keyword>
<keyword id="KW-1003">Cell membrane</keyword>
<keyword id="KW-0201">Cytochrome c-type biogenesis</keyword>
<keyword id="KW-0349">Heme</keyword>
<keyword id="KW-0408">Iron</keyword>
<keyword id="KW-0472">Membrane</keyword>
<keyword id="KW-0479">Metal-binding</keyword>
<keyword id="KW-0735">Signal-anchor</keyword>
<keyword id="KW-0812">Transmembrane</keyword>
<keyword id="KW-1133">Transmembrane helix</keyword>
<dbReference type="EMBL" id="CP000091">
    <property type="protein sequence ID" value="AAZ64117.1"/>
    <property type="molecule type" value="Genomic_DNA"/>
</dbReference>
<dbReference type="SMR" id="Q46RW7"/>
<dbReference type="STRING" id="264198.Reut_B4769"/>
<dbReference type="KEGG" id="reu:Reut_B4769"/>
<dbReference type="eggNOG" id="COG2332">
    <property type="taxonomic scope" value="Bacteria"/>
</dbReference>
<dbReference type="HOGENOM" id="CLU_079503_1_1_4"/>
<dbReference type="OrthoDB" id="9793584at2"/>
<dbReference type="GO" id="GO:0005886">
    <property type="term" value="C:plasma membrane"/>
    <property type="evidence" value="ECO:0007669"/>
    <property type="project" value="UniProtKB-SubCell"/>
</dbReference>
<dbReference type="GO" id="GO:0020037">
    <property type="term" value="F:heme binding"/>
    <property type="evidence" value="ECO:0007669"/>
    <property type="project" value="InterPro"/>
</dbReference>
<dbReference type="GO" id="GO:0046872">
    <property type="term" value="F:metal ion binding"/>
    <property type="evidence" value="ECO:0007669"/>
    <property type="project" value="UniProtKB-KW"/>
</dbReference>
<dbReference type="GO" id="GO:0017004">
    <property type="term" value="P:cytochrome complex assembly"/>
    <property type="evidence" value="ECO:0007669"/>
    <property type="project" value="UniProtKB-KW"/>
</dbReference>
<dbReference type="FunFam" id="2.40.50.140:FF:000104">
    <property type="entry name" value="Cytochrome c-type biogenesis protein CcmE"/>
    <property type="match status" value="1"/>
</dbReference>
<dbReference type="Gene3D" id="2.40.50.140">
    <property type="entry name" value="Nucleic acid-binding proteins"/>
    <property type="match status" value="1"/>
</dbReference>
<dbReference type="HAMAP" id="MF_01959">
    <property type="entry name" value="CcmE"/>
    <property type="match status" value="1"/>
</dbReference>
<dbReference type="InterPro" id="IPR004329">
    <property type="entry name" value="CcmE"/>
</dbReference>
<dbReference type="InterPro" id="IPR036127">
    <property type="entry name" value="CcmE-like_sf"/>
</dbReference>
<dbReference type="InterPro" id="IPR012340">
    <property type="entry name" value="NA-bd_OB-fold"/>
</dbReference>
<dbReference type="NCBIfam" id="NF009727">
    <property type="entry name" value="PRK13254.1-1"/>
    <property type="match status" value="1"/>
</dbReference>
<dbReference type="NCBIfam" id="NF009729">
    <property type="entry name" value="PRK13254.1-3"/>
    <property type="match status" value="1"/>
</dbReference>
<dbReference type="NCBIfam" id="NF009731">
    <property type="entry name" value="PRK13254.1-5"/>
    <property type="match status" value="1"/>
</dbReference>
<dbReference type="PANTHER" id="PTHR34128">
    <property type="entry name" value="CYTOCHROME C-TYPE BIOGENESIS PROTEIN CCME HOMOLOG, MITOCHONDRIAL"/>
    <property type="match status" value="1"/>
</dbReference>
<dbReference type="PANTHER" id="PTHR34128:SF2">
    <property type="entry name" value="CYTOCHROME C-TYPE BIOGENESIS PROTEIN CCME HOMOLOG, MITOCHONDRIAL"/>
    <property type="match status" value="1"/>
</dbReference>
<dbReference type="Pfam" id="PF03100">
    <property type="entry name" value="CcmE"/>
    <property type="match status" value="1"/>
</dbReference>
<dbReference type="SUPFAM" id="SSF82093">
    <property type="entry name" value="Heme chaperone CcmE"/>
    <property type="match status" value="1"/>
</dbReference>
<name>CCME_CUPPJ</name>
<feature type="chain" id="PRO_0000238846" description="Cytochrome c-type biogenesis protein CcmE">
    <location>
        <begin position="1"/>
        <end position="159"/>
    </location>
</feature>
<feature type="topological domain" description="Cytoplasmic" evidence="1">
    <location>
        <begin position="1"/>
        <end position="7"/>
    </location>
</feature>
<feature type="transmembrane region" description="Helical; Signal-anchor for type II membrane protein" evidence="1">
    <location>
        <begin position="8"/>
        <end position="28"/>
    </location>
</feature>
<feature type="topological domain" description="Periplasmic" evidence="1">
    <location>
        <begin position="29"/>
        <end position="159"/>
    </location>
</feature>
<feature type="binding site" description="covalent" evidence="1">
    <location>
        <position position="123"/>
    </location>
    <ligand>
        <name>heme</name>
        <dbReference type="ChEBI" id="CHEBI:30413"/>
    </ligand>
</feature>
<feature type="binding site" description="axial binding residue" evidence="1">
    <location>
        <position position="127"/>
    </location>
    <ligand>
        <name>heme</name>
        <dbReference type="ChEBI" id="CHEBI:30413"/>
    </ligand>
    <ligandPart>
        <name>Fe</name>
        <dbReference type="ChEBI" id="CHEBI:18248"/>
    </ligandPart>
</feature>
<reference key="1">
    <citation type="journal article" date="2010" name="PLoS ONE">
        <title>The complete multipartite genome sequence of Cupriavidus necator JMP134, a versatile pollutant degrader.</title>
        <authorList>
            <person name="Lykidis A."/>
            <person name="Perez-Pantoja D."/>
            <person name="Ledger T."/>
            <person name="Mavromatis K."/>
            <person name="Anderson I.J."/>
            <person name="Ivanova N.N."/>
            <person name="Hooper S.D."/>
            <person name="Lapidus A."/>
            <person name="Lucas S."/>
            <person name="Gonzalez B."/>
            <person name="Kyrpides N.C."/>
        </authorList>
    </citation>
    <scope>NUCLEOTIDE SEQUENCE [LARGE SCALE GENOMIC DNA]</scope>
    <source>
        <strain>JMP134 / LMG 1197</strain>
    </source>
</reference>
<evidence type="ECO:0000255" key="1">
    <source>
        <dbReference type="HAMAP-Rule" id="MF_01959"/>
    </source>
</evidence>
<protein>
    <recommendedName>
        <fullName evidence="1">Cytochrome c-type biogenesis protein CcmE</fullName>
    </recommendedName>
    <alternativeName>
        <fullName evidence="1">Cytochrome c maturation protein E</fullName>
    </alternativeName>
    <alternativeName>
        <fullName evidence="1">Heme chaperone CcmE</fullName>
    </alternativeName>
</protein>